<feature type="chain" id="PRO_1000166645" description="NADH-quinone oxidoreductase subunit I">
    <location>
        <begin position="1"/>
        <end position="180"/>
    </location>
</feature>
<feature type="domain" description="4Fe-4S ferredoxin-type 1" evidence="1">
    <location>
        <begin position="50"/>
        <end position="80"/>
    </location>
</feature>
<feature type="domain" description="4Fe-4S ferredoxin-type 2" evidence="1">
    <location>
        <begin position="90"/>
        <end position="119"/>
    </location>
</feature>
<feature type="binding site" evidence="1">
    <location>
        <position position="60"/>
    </location>
    <ligand>
        <name>[4Fe-4S] cluster</name>
        <dbReference type="ChEBI" id="CHEBI:49883"/>
        <label>1</label>
    </ligand>
</feature>
<feature type="binding site" evidence="1">
    <location>
        <position position="63"/>
    </location>
    <ligand>
        <name>[4Fe-4S] cluster</name>
        <dbReference type="ChEBI" id="CHEBI:49883"/>
        <label>1</label>
    </ligand>
</feature>
<feature type="binding site" evidence="1">
    <location>
        <position position="66"/>
    </location>
    <ligand>
        <name>[4Fe-4S] cluster</name>
        <dbReference type="ChEBI" id="CHEBI:49883"/>
        <label>1</label>
    </ligand>
</feature>
<feature type="binding site" evidence="1">
    <location>
        <position position="70"/>
    </location>
    <ligand>
        <name>[4Fe-4S] cluster</name>
        <dbReference type="ChEBI" id="CHEBI:49883"/>
        <label>2</label>
    </ligand>
</feature>
<feature type="binding site" evidence="1">
    <location>
        <position position="99"/>
    </location>
    <ligand>
        <name>[4Fe-4S] cluster</name>
        <dbReference type="ChEBI" id="CHEBI:49883"/>
        <label>2</label>
    </ligand>
</feature>
<feature type="binding site" evidence="1">
    <location>
        <position position="102"/>
    </location>
    <ligand>
        <name>[4Fe-4S] cluster</name>
        <dbReference type="ChEBI" id="CHEBI:49883"/>
        <label>2</label>
    </ligand>
</feature>
<feature type="binding site" evidence="1">
    <location>
        <position position="105"/>
    </location>
    <ligand>
        <name>[4Fe-4S] cluster</name>
        <dbReference type="ChEBI" id="CHEBI:49883"/>
        <label>2</label>
    </ligand>
</feature>
<feature type="binding site" evidence="1">
    <location>
        <position position="109"/>
    </location>
    <ligand>
        <name>[4Fe-4S] cluster</name>
        <dbReference type="ChEBI" id="CHEBI:49883"/>
        <label>1</label>
    </ligand>
</feature>
<proteinExistence type="inferred from homology"/>
<organism>
    <name type="scientific">Yersinia pseudotuberculosis serotype O:3 (strain YPIII)</name>
    <dbReference type="NCBI Taxonomy" id="502800"/>
    <lineage>
        <taxon>Bacteria</taxon>
        <taxon>Pseudomonadati</taxon>
        <taxon>Pseudomonadota</taxon>
        <taxon>Gammaproteobacteria</taxon>
        <taxon>Enterobacterales</taxon>
        <taxon>Yersiniaceae</taxon>
        <taxon>Yersinia</taxon>
    </lineage>
</organism>
<protein>
    <recommendedName>
        <fullName evidence="1">NADH-quinone oxidoreductase subunit I</fullName>
        <ecNumber evidence="1">7.1.1.-</ecNumber>
    </recommendedName>
    <alternativeName>
        <fullName evidence="1">NADH dehydrogenase I subunit I</fullName>
    </alternativeName>
    <alternativeName>
        <fullName evidence="1">NDH-1 subunit I</fullName>
    </alternativeName>
</protein>
<gene>
    <name evidence="1" type="primary">nuoI</name>
    <name type="ordered locus">YPK_1567</name>
</gene>
<dbReference type="EC" id="7.1.1.-" evidence="1"/>
<dbReference type="EMBL" id="CP000950">
    <property type="protein sequence ID" value="ACA67860.1"/>
    <property type="molecule type" value="Genomic_DNA"/>
</dbReference>
<dbReference type="RefSeq" id="WP_002210273.1">
    <property type="nucleotide sequence ID" value="NZ_CP009792.1"/>
</dbReference>
<dbReference type="SMR" id="B1JGM0"/>
<dbReference type="GeneID" id="96666079"/>
<dbReference type="KEGG" id="ypy:YPK_1567"/>
<dbReference type="PATRIC" id="fig|502800.11.peg.2211"/>
<dbReference type="GO" id="GO:0005886">
    <property type="term" value="C:plasma membrane"/>
    <property type="evidence" value="ECO:0007669"/>
    <property type="project" value="UniProtKB-SubCell"/>
</dbReference>
<dbReference type="GO" id="GO:0051539">
    <property type="term" value="F:4 iron, 4 sulfur cluster binding"/>
    <property type="evidence" value="ECO:0007669"/>
    <property type="project" value="UniProtKB-KW"/>
</dbReference>
<dbReference type="GO" id="GO:0005506">
    <property type="term" value="F:iron ion binding"/>
    <property type="evidence" value="ECO:0007669"/>
    <property type="project" value="UniProtKB-UniRule"/>
</dbReference>
<dbReference type="GO" id="GO:0050136">
    <property type="term" value="F:NADH:ubiquinone reductase (non-electrogenic) activity"/>
    <property type="evidence" value="ECO:0007669"/>
    <property type="project" value="UniProtKB-UniRule"/>
</dbReference>
<dbReference type="GO" id="GO:0048038">
    <property type="term" value="F:quinone binding"/>
    <property type="evidence" value="ECO:0007669"/>
    <property type="project" value="UniProtKB-KW"/>
</dbReference>
<dbReference type="GO" id="GO:0009060">
    <property type="term" value="P:aerobic respiration"/>
    <property type="evidence" value="ECO:0007669"/>
    <property type="project" value="TreeGrafter"/>
</dbReference>
<dbReference type="FunFam" id="3.30.70.3270:FF:000002">
    <property type="entry name" value="NADH-quinone oxidoreductase subunit I"/>
    <property type="match status" value="1"/>
</dbReference>
<dbReference type="Gene3D" id="3.30.70.3270">
    <property type="match status" value="1"/>
</dbReference>
<dbReference type="HAMAP" id="MF_01351">
    <property type="entry name" value="NDH1_NuoI"/>
    <property type="match status" value="1"/>
</dbReference>
<dbReference type="InterPro" id="IPR017896">
    <property type="entry name" value="4Fe4S_Fe-S-bd"/>
</dbReference>
<dbReference type="InterPro" id="IPR017900">
    <property type="entry name" value="4Fe4S_Fe_S_CS"/>
</dbReference>
<dbReference type="InterPro" id="IPR010226">
    <property type="entry name" value="NADH_quinone_OxRdtase_chainI"/>
</dbReference>
<dbReference type="NCBIfam" id="TIGR01971">
    <property type="entry name" value="NuoI"/>
    <property type="match status" value="1"/>
</dbReference>
<dbReference type="NCBIfam" id="NF004536">
    <property type="entry name" value="PRK05888.1-1"/>
    <property type="match status" value="1"/>
</dbReference>
<dbReference type="PANTHER" id="PTHR10849:SF20">
    <property type="entry name" value="NADH DEHYDROGENASE [UBIQUINONE] IRON-SULFUR PROTEIN 8, MITOCHONDRIAL"/>
    <property type="match status" value="1"/>
</dbReference>
<dbReference type="PANTHER" id="PTHR10849">
    <property type="entry name" value="NADH DEHYDROGENASE UBIQUINONE IRON-SULFUR PROTEIN 8, MITOCHONDRIAL"/>
    <property type="match status" value="1"/>
</dbReference>
<dbReference type="Pfam" id="PF12838">
    <property type="entry name" value="Fer4_7"/>
    <property type="match status" value="1"/>
</dbReference>
<dbReference type="SUPFAM" id="SSF54862">
    <property type="entry name" value="4Fe-4S ferredoxins"/>
    <property type="match status" value="1"/>
</dbReference>
<dbReference type="PROSITE" id="PS00198">
    <property type="entry name" value="4FE4S_FER_1"/>
    <property type="match status" value="2"/>
</dbReference>
<dbReference type="PROSITE" id="PS51379">
    <property type="entry name" value="4FE4S_FER_2"/>
    <property type="match status" value="2"/>
</dbReference>
<name>NUOI_YERPY</name>
<accession>B1JGM0</accession>
<reference key="1">
    <citation type="submission" date="2008-02" db="EMBL/GenBank/DDBJ databases">
        <title>Complete sequence of Yersinia pseudotuberculosis YPIII.</title>
        <authorList>
            <consortium name="US DOE Joint Genome Institute"/>
            <person name="Copeland A."/>
            <person name="Lucas S."/>
            <person name="Lapidus A."/>
            <person name="Glavina del Rio T."/>
            <person name="Dalin E."/>
            <person name="Tice H."/>
            <person name="Bruce D."/>
            <person name="Goodwin L."/>
            <person name="Pitluck S."/>
            <person name="Munk A.C."/>
            <person name="Brettin T."/>
            <person name="Detter J.C."/>
            <person name="Han C."/>
            <person name="Tapia R."/>
            <person name="Schmutz J."/>
            <person name="Larimer F."/>
            <person name="Land M."/>
            <person name="Hauser L."/>
            <person name="Challacombe J.F."/>
            <person name="Green L."/>
            <person name="Lindler L.E."/>
            <person name="Nikolich M.P."/>
            <person name="Richardson P."/>
        </authorList>
    </citation>
    <scope>NUCLEOTIDE SEQUENCE [LARGE SCALE GENOMIC DNA]</scope>
    <source>
        <strain>YPIII</strain>
    </source>
</reference>
<evidence type="ECO:0000255" key="1">
    <source>
        <dbReference type="HAMAP-Rule" id="MF_01351"/>
    </source>
</evidence>
<comment type="function">
    <text evidence="1">NDH-1 shuttles electrons from NADH, via FMN and iron-sulfur (Fe-S) centers, to quinones in the respiratory chain. The immediate electron acceptor for the enzyme in this species is believed to be ubiquinone. Couples the redox reaction to proton translocation (for every two electrons transferred, four hydrogen ions are translocated across the cytoplasmic membrane), and thus conserves the redox energy in a proton gradient.</text>
</comment>
<comment type="catalytic activity">
    <reaction evidence="1">
        <text>a quinone + NADH + 5 H(+)(in) = a quinol + NAD(+) + 4 H(+)(out)</text>
        <dbReference type="Rhea" id="RHEA:57888"/>
        <dbReference type="ChEBI" id="CHEBI:15378"/>
        <dbReference type="ChEBI" id="CHEBI:24646"/>
        <dbReference type="ChEBI" id="CHEBI:57540"/>
        <dbReference type="ChEBI" id="CHEBI:57945"/>
        <dbReference type="ChEBI" id="CHEBI:132124"/>
    </reaction>
</comment>
<comment type="cofactor">
    <cofactor evidence="1">
        <name>[4Fe-4S] cluster</name>
        <dbReference type="ChEBI" id="CHEBI:49883"/>
    </cofactor>
    <text evidence="1">Binds 2 [4Fe-4S] clusters per subunit.</text>
</comment>
<comment type="subunit">
    <text evidence="1">NDH-1 is composed of 13 different subunits. Subunits NuoA, H, J, K, L, M, N constitute the membrane sector of the complex.</text>
</comment>
<comment type="subcellular location">
    <subcellularLocation>
        <location evidence="1">Cell inner membrane</location>
        <topology evidence="1">Peripheral membrane protein</topology>
    </subcellularLocation>
</comment>
<comment type="similarity">
    <text evidence="1">Belongs to the complex I 23 kDa subunit family.</text>
</comment>
<sequence>MTLKELVVGFGTQVRSLWMIGLHAFHKRETLMYPEEPVYLPPRYRGRIVLTRDPDGEERCVACNLCAVACPVGCISLQKAEQKDGRWYPEFFRINFSRCIFCGLCEEACPTTAIQLTPDFEMGEFKRQDLVYEKEDLLISGPGKYPEYNFYRMAGMAIDGKQKGEAENEAKPIDVKGLMP</sequence>
<keyword id="KW-0004">4Fe-4S</keyword>
<keyword id="KW-0997">Cell inner membrane</keyword>
<keyword id="KW-1003">Cell membrane</keyword>
<keyword id="KW-0408">Iron</keyword>
<keyword id="KW-0411">Iron-sulfur</keyword>
<keyword id="KW-0472">Membrane</keyword>
<keyword id="KW-0479">Metal-binding</keyword>
<keyword id="KW-0520">NAD</keyword>
<keyword id="KW-0874">Quinone</keyword>
<keyword id="KW-0677">Repeat</keyword>
<keyword id="KW-1278">Translocase</keyword>
<keyword id="KW-0830">Ubiquinone</keyword>